<organism>
    <name type="scientific">Amblyomma cajennense</name>
    <name type="common">Cayenne tick</name>
    <name type="synonym">Acarus cajennensis</name>
    <dbReference type="NCBI Taxonomy" id="34607"/>
    <lineage>
        <taxon>Eukaryota</taxon>
        <taxon>Metazoa</taxon>
        <taxon>Ecdysozoa</taxon>
        <taxon>Arthropoda</taxon>
        <taxon>Chelicerata</taxon>
        <taxon>Arachnida</taxon>
        <taxon>Acari</taxon>
        <taxon>Parasitiformes</taxon>
        <taxon>Ixodida</taxon>
        <taxon>Ixodoidea</taxon>
        <taxon>Ixodidae</taxon>
        <taxon>Amblyomminae</taxon>
        <taxon>Amblyomma</taxon>
    </lineage>
</organism>
<keyword id="KW-1015">Disulfide bond</keyword>
<keyword id="KW-0325">Glycoprotein</keyword>
<keyword id="KW-0964">Secreted</keyword>
<keyword id="KW-0732">Signal</keyword>
<dbReference type="EMBL" id="GBBK01005490">
    <property type="protein sequence ID" value="JAC18992.1"/>
    <property type="molecule type" value="mRNA"/>
</dbReference>
<dbReference type="SMR" id="A0A023FBW7"/>
<dbReference type="GO" id="GO:0005576">
    <property type="term" value="C:extracellular region"/>
    <property type="evidence" value="ECO:0007669"/>
    <property type="project" value="UniProtKB-SubCell"/>
</dbReference>
<dbReference type="GO" id="GO:0019957">
    <property type="term" value="F:C-C chemokine binding"/>
    <property type="evidence" value="ECO:0000314"/>
    <property type="project" value="UniProtKB"/>
</dbReference>
<dbReference type="Gene3D" id="2.30.130.100">
    <property type="match status" value="1"/>
</dbReference>
<dbReference type="InterPro" id="IPR045797">
    <property type="entry name" value="EVA_Class_A"/>
</dbReference>
<dbReference type="Pfam" id="PF19429">
    <property type="entry name" value="EVA_Class_A"/>
    <property type="match status" value="1"/>
</dbReference>
<accession>A0A023FBW7</accession>
<sequence>MKVLLYIAASCLMLLALNVSAENTQQEEEDYDYGTDTCPFPVLANKTNKAKFVGCHQKCNGGDQKLTDGTACYVVERKVWDRMTPMLWYSCPLGECKNGVCEDLRKKEECRKGNGEEK</sequence>
<comment type="function">
    <text evidence="4">Salivary chemokine-binding protein which binds to host chemokines CCL1, CCL3, CCL5 and CCL22.</text>
</comment>
<comment type="subcellular location">
    <subcellularLocation>
        <location evidence="6">Secreted</location>
    </subcellularLocation>
</comment>
<protein>
    <recommendedName>
        <fullName evidence="5">Evasin P546</fullName>
    </recommendedName>
</protein>
<name>EV546_AMBCJ</name>
<feature type="signal peptide" evidence="2">
    <location>
        <begin position="1"/>
        <end position="21"/>
    </location>
</feature>
<feature type="chain" id="PRO_5001514797" description="Evasin P546" evidence="2">
    <location>
        <begin position="22"/>
        <end position="118"/>
    </location>
</feature>
<feature type="glycosylation site" description="N-linked (GlcNAc...) asparagine" evidence="3">
    <location>
        <position position="45"/>
    </location>
</feature>
<feature type="disulfide bond" evidence="1">
    <location>
        <begin position="38"/>
        <end position="59"/>
    </location>
</feature>
<feature type="disulfide bond" evidence="1">
    <location>
        <begin position="55"/>
        <end position="96"/>
    </location>
</feature>
<feature type="disulfide bond" evidence="1">
    <location>
        <begin position="72"/>
        <end position="101"/>
    </location>
</feature>
<feature type="disulfide bond" evidence="1">
    <location>
        <begin position="91"/>
        <end position="110"/>
    </location>
</feature>
<reference evidence="7" key="1">
    <citation type="journal article" date="2014" name="Parasit. Vectors">
        <title>The sialotranscriptome of Amblyomma triste, Amblyomma parvum and Amblyomma cajennense ticks, uncovered by 454-based RNA-seq.</title>
        <authorList>
            <person name="Garcia G.R."/>
            <person name="Gardinassi L.G."/>
            <person name="Ribeiro J.M."/>
            <person name="Anatriello E."/>
            <person name="Ferreira B.R."/>
            <person name="Moreira H.N."/>
            <person name="Mafra C."/>
            <person name="Martins M.M."/>
            <person name="Szabo M.P."/>
            <person name="de Miranda-Santos I.K."/>
            <person name="Maruyama S.R."/>
        </authorList>
    </citation>
    <scope>NUCLEOTIDE SEQUENCE [LARGE SCALE MRNA]</scope>
    <source>
        <strain evidence="7">Uberlandia</strain>
        <tissue evidence="7">Salivary gland</tissue>
    </source>
</reference>
<reference evidence="6" key="2">
    <citation type="journal article" date="2017" name="Sci. Rep.">
        <title>Yeast surface display identifies a family of evasins from ticks with novel polyvalent CC chemokine-binding activities.</title>
        <authorList>
            <person name="Singh K."/>
            <person name="Davies G."/>
            <person name="Alenazi Y."/>
            <person name="Eaton J.R.O."/>
            <person name="Kawamura A."/>
            <person name="Bhattacharya S."/>
        </authorList>
    </citation>
    <scope>FUNCTION</scope>
</reference>
<proteinExistence type="inferred from homology"/>
<evidence type="ECO:0000250" key="1">
    <source>
        <dbReference type="UniProtKB" id="P0C8E7"/>
    </source>
</evidence>
<evidence type="ECO:0000255" key="2"/>
<evidence type="ECO:0000255" key="3">
    <source>
        <dbReference type="PROSITE-ProRule" id="PRU00498"/>
    </source>
</evidence>
<evidence type="ECO:0000269" key="4">
    <source>
    </source>
</evidence>
<evidence type="ECO:0000303" key="5">
    <source>
    </source>
</evidence>
<evidence type="ECO:0000305" key="6"/>
<evidence type="ECO:0000312" key="7">
    <source>
        <dbReference type="EMBL" id="JAC18992.1"/>
    </source>
</evidence>